<reference key="1">
    <citation type="journal article" date="2007" name="Microbiology">
        <title>Comparative analysis of the Corynebacterium glutamicum group and complete genome sequence of strain R.</title>
        <authorList>
            <person name="Yukawa H."/>
            <person name="Omumasaba C.A."/>
            <person name="Nonaka H."/>
            <person name="Kos P."/>
            <person name="Okai N."/>
            <person name="Suzuki N."/>
            <person name="Suda M."/>
            <person name="Tsuge Y."/>
            <person name="Watanabe J."/>
            <person name="Ikeda Y."/>
            <person name="Vertes A.A."/>
            <person name="Inui M."/>
        </authorList>
    </citation>
    <scope>NUCLEOTIDE SEQUENCE [LARGE SCALE GENOMIC DNA]</scope>
    <source>
        <strain>R</strain>
    </source>
</reference>
<evidence type="ECO:0000255" key="1">
    <source>
        <dbReference type="HAMAP-Rule" id="MF_00015"/>
    </source>
</evidence>
<evidence type="ECO:0000256" key="2">
    <source>
        <dbReference type="SAM" id="MobiDB-lite"/>
    </source>
</evidence>
<protein>
    <recommendedName>
        <fullName evidence="1">LexA repressor</fullName>
        <ecNumber evidence="1">3.4.21.88</ecNumber>
    </recommendedName>
</protein>
<dbReference type="EC" id="3.4.21.88" evidence="1"/>
<dbReference type="EMBL" id="AP009044">
    <property type="protein sequence ID" value="BAF54754.1"/>
    <property type="molecule type" value="Genomic_DNA"/>
</dbReference>
<dbReference type="RefSeq" id="WP_011897372.1">
    <property type="nucleotide sequence ID" value="NC_009342.1"/>
</dbReference>
<dbReference type="SMR" id="A4QET8"/>
<dbReference type="MEROPS" id="S24.001"/>
<dbReference type="KEGG" id="cgt:cgR_1760"/>
<dbReference type="HOGENOM" id="CLU_066192_45_0_11"/>
<dbReference type="PhylomeDB" id="A4QET8"/>
<dbReference type="Proteomes" id="UP000006698">
    <property type="component" value="Chromosome"/>
</dbReference>
<dbReference type="GO" id="GO:0003677">
    <property type="term" value="F:DNA binding"/>
    <property type="evidence" value="ECO:0007669"/>
    <property type="project" value="UniProtKB-UniRule"/>
</dbReference>
<dbReference type="GO" id="GO:0004252">
    <property type="term" value="F:serine-type endopeptidase activity"/>
    <property type="evidence" value="ECO:0007669"/>
    <property type="project" value="UniProtKB-UniRule"/>
</dbReference>
<dbReference type="GO" id="GO:0006281">
    <property type="term" value="P:DNA repair"/>
    <property type="evidence" value="ECO:0007669"/>
    <property type="project" value="UniProtKB-UniRule"/>
</dbReference>
<dbReference type="GO" id="GO:0006260">
    <property type="term" value="P:DNA replication"/>
    <property type="evidence" value="ECO:0007669"/>
    <property type="project" value="UniProtKB-UniRule"/>
</dbReference>
<dbReference type="GO" id="GO:0045892">
    <property type="term" value="P:negative regulation of DNA-templated transcription"/>
    <property type="evidence" value="ECO:0007669"/>
    <property type="project" value="UniProtKB-UniRule"/>
</dbReference>
<dbReference type="GO" id="GO:0006508">
    <property type="term" value="P:proteolysis"/>
    <property type="evidence" value="ECO:0007669"/>
    <property type="project" value="InterPro"/>
</dbReference>
<dbReference type="GO" id="GO:0009432">
    <property type="term" value="P:SOS response"/>
    <property type="evidence" value="ECO:0007669"/>
    <property type="project" value="UniProtKB-UniRule"/>
</dbReference>
<dbReference type="CDD" id="cd06529">
    <property type="entry name" value="S24_LexA-like"/>
    <property type="match status" value="1"/>
</dbReference>
<dbReference type="FunFam" id="1.10.10.10:FF:000009">
    <property type="entry name" value="LexA repressor"/>
    <property type="match status" value="1"/>
</dbReference>
<dbReference type="FunFam" id="2.10.109.10:FF:000001">
    <property type="entry name" value="LexA repressor"/>
    <property type="match status" value="1"/>
</dbReference>
<dbReference type="Gene3D" id="2.10.109.10">
    <property type="entry name" value="Umud Fragment, subunit A"/>
    <property type="match status" value="1"/>
</dbReference>
<dbReference type="Gene3D" id="1.10.10.10">
    <property type="entry name" value="Winged helix-like DNA-binding domain superfamily/Winged helix DNA-binding domain"/>
    <property type="match status" value="1"/>
</dbReference>
<dbReference type="HAMAP" id="MF_00015">
    <property type="entry name" value="LexA"/>
    <property type="match status" value="1"/>
</dbReference>
<dbReference type="InterPro" id="IPR006200">
    <property type="entry name" value="LexA"/>
</dbReference>
<dbReference type="InterPro" id="IPR039418">
    <property type="entry name" value="LexA-like"/>
</dbReference>
<dbReference type="InterPro" id="IPR036286">
    <property type="entry name" value="LexA/Signal_pep-like_sf"/>
</dbReference>
<dbReference type="InterPro" id="IPR006199">
    <property type="entry name" value="LexA_DNA-bd_dom"/>
</dbReference>
<dbReference type="InterPro" id="IPR050077">
    <property type="entry name" value="LexA_repressor"/>
</dbReference>
<dbReference type="InterPro" id="IPR006197">
    <property type="entry name" value="Peptidase_S24_LexA"/>
</dbReference>
<dbReference type="InterPro" id="IPR015927">
    <property type="entry name" value="Peptidase_S24_S26A/B/C"/>
</dbReference>
<dbReference type="InterPro" id="IPR036388">
    <property type="entry name" value="WH-like_DNA-bd_sf"/>
</dbReference>
<dbReference type="InterPro" id="IPR036390">
    <property type="entry name" value="WH_DNA-bd_sf"/>
</dbReference>
<dbReference type="NCBIfam" id="TIGR00498">
    <property type="entry name" value="lexA"/>
    <property type="match status" value="1"/>
</dbReference>
<dbReference type="PANTHER" id="PTHR33516">
    <property type="entry name" value="LEXA REPRESSOR"/>
    <property type="match status" value="1"/>
</dbReference>
<dbReference type="PANTHER" id="PTHR33516:SF2">
    <property type="entry name" value="LEXA REPRESSOR-RELATED"/>
    <property type="match status" value="1"/>
</dbReference>
<dbReference type="Pfam" id="PF01726">
    <property type="entry name" value="LexA_DNA_bind"/>
    <property type="match status" value="1"/>
</dbReference>
<dbReference type="Pfam" id="PF00717">
    <property type="entry name" value="Peptidase_S24"/>
    <property type="match status" value="1"/>
</dbReference>
<dbReference type="PRINTS" id="PR00726">
    <property type="entry name" value="LEXASERPTASE"/>
</dbReference>
<dbReference type="SUPFAM" id="SSF51306">
    <property type="entry name" value="LexA/Signal peptidase"/>
    <property type="match status" value="1"/>
</dbReference>
<dbReference type="SUPFAM" id="SSF46785">
    <property type="entry name" value="Winged helix' DNA-binding domain"/>
    <property type="match status" value="1"/>
</dbReference>
<accession>A4QET8</accession>
<gene>
    <name evidence="1" type="primary">lexA</name>
    <name type="ordered locus">cgR_1760</name>
</gene>
<organism>
    <name type="scientific">Corynebacterium glutamicum (strain R)</name>
    <dbReference type="NCBI Taxonomy" id="340322"/>
    <lineage>
        <taxon>Bacteria</taxon>
        <taxon>Bacillati</taxon>
        <taxon>Actinomycetota</taxon>
        <taxon>Actinomycetes</taxon>
        <taxon>Mycobacteriales</taxon>
        <taxon>Corynebacteriaceae</taxon>
        <taxon>Corynebacterium</taxon>
    </lineage>
</organism>
<proteinExistence type="inferred from homology"/>
<keyword id="KW-0068">Autocatalytic cleavage</keyword>
<keyword id="KW-0227">DNA damage</keyword>
<keyword id="KW-0234">DNA repair</keyword>
<keyword id="KW-0235">DNA replication</keyword>
<keyword id="KW-0238">DNA-binding</keyword>
<keyword id="KW-0378">Hydrolase</keyword>
<keyword id="KW-0678">Repressor</keyword>
<keyword id="KW-0742">SOS response</keyword>
<keyword id="KW-0804">Transcription</keyword>
<keyword id="KW-0805">Transcription regulation</keyword>
<comment type="function">
    <text evidence="1">Represses a number of genes involved in the response to DNA damage (SOS response), including recA and lexA. In the presence of single-stranded DNA, RecA interacts with LexA causing an autocatalytic cleavage which disrupts the DNA-binding part of LexA, leading to derepression of the SOS regulon and eventually DNA repair.</text>
</comment>
<comment type="catalytic activity">
    <reaction evidence="1">
        <text>Hydrolysis of Ala-|-Gly bond in repressor LexA.</text>
        <dbReference type="EC" id="3.4.21.88"/>
    </reaction>
</comment>
<comment type="subunit">
    <text evidence="1">Homodimer.</text>
</comment>
<comment type="similarity">
    <text evidence="1">Belongs to the peptidase S24 family.</text>
</comment>
<sequence>MAIEKKPAGARGSRGSRTVKTLPNGKPDPASLSDRQRRILEVIRDAVVLRGYPPSIREIGDAAGLQSTSSVAYQLKELEKKGFLRRDPNKPRAVDVRHLPETESRSSKAATQAKSKAPQAGAHDPELAGQTSFVPVVGKIAAGSPITAEQNIEEYYPLPAEIVGDGDLFMLQVVGESMRDAGILTGDWVVVRSQPVAEQGEFVAAMIDGEATVKEFHKDSSGIWLLPHNDTFAPIPAENAEIMGKVVSVMRKL</sequence>
<feature type="chain" id="PRO_0000322727" description="LexA repressor">
    <location>
        <begin position="1"/>
        <end position="253"/>
    </location>
</feature>
<feature type="DNA-binding region" description="H-T-H motif" evidence="1">
    <location>
        <begin position="56"/>
        <end position="76"/>
    </location>
</feature>
<feature type="region of interest" description="Disordered" evidence="2">
    <location>
        <begin position="1"/>
        <end position="34"/>
    </location>
</feature>
<feature type="region of interest" description="Disordered" evidence="2">
    <location>
        <begin position="82"/>
        <end position="127"/>
    </location>
</feature>
<feature type="compositionally biased region" description="Basic and acidic residues" evidence="2">
    <location>
        <begin position="82"/>
        <end position="106"/>
    </location>
</feature>
<feature type="compositionally biased region" description="Low complexity" evidence="2">
    <location>
        <begin position="107"/>
        <end position="120"/>
    </location>
</feature>
<feature type="active site" description="For autocatalytic cleavage activity" evidence="1">
    <location>
        <position position="177"/>
    </location>
</feature>
<feature type="active site" description="For autocatalytic cleavage activity" evidence="1">
    <location>
        <position position="214"/>
    </location>
</feature>
<feature type="site" description="Cleavage; by autolysis" evidence="1">
    <location>
        <begin position="142"/>
        <end position="143"/>
    </location>
</feature>
<name>LEXA_CORGB</name>